<dbReference type="EC" id="1.6.5.-" evidence="1"/>
<dbReference type="EC" id="1.7.1.17" evidence="1"/>
<dbReference type="EMBL" id="AL935263">
    <property type="protein sequence ID" value="CCC77640.1"/>
    <property type="molecule type" value="Genomic_DNA"/>
</dbReference>
<dbReference type="RefSeq" id="WP_011100869.1">
    <property type="nucleotide sequence ID" value="NC_004567.2"/>
</dbReference>
<dbReference type="RefSeq" id="YP_004888154.1">
    <property type="nucleotide sequence ID" value="NC_004567.2"/>
</dbReference>
<dbReference type="SMR" id="Q890E7"/>
<dbReference type="STRING" id="220668.lp_0075"/>
<dbReference type="DNASU" id="1061266"/>
<dbReference type="EnsemblBacteria" id="CCC77640">
    <property type="protein sequence ID" value="CCC77640"/>
    <property type="gene ID" value="lp_0075"/>
</dbReference>
<dbReference type="KEGG" id="lpl:lp_0075"/>
<dbReference type="PATRIC" id="fig|220668.9.peg.62"/>
<dbReference type="eggNOG" id="COG1182">
    <property type="taxonomic scope" value="Bacteria"/>
</dbReference>
<dbReference type="HOGENOM" id="CLU_088964_3_0_9"/>
<dbReference type="OrthoDB" id="9805013at2"/>
<dbReference type="PhylomeDB" id="Q890E7"/>
<dbReference type="Proteomes" id="UP000000432">
    <property type="component" value="Chromosome"/>
</dbReference>
<dbReference type="GO" id="GO:0009055">
    <property type="term" value="F:electron transfer activity"/>
    <property type="evidence" value="ECO:0007669"/>
    <property type="project" value="UniProtKB-UniRule"/>
</dbReference>
<dbReference type="GO" id="GO:0010181">
    <property type="term" value="F:FMN binding"/>
    <property type="evidence" value="ECO:0007669"/>
    <property type="project" value="UniProtKB-UniRule"/>
</dbReference>
<dbReference type="GO" id="GO:0016652">
    <property type="term" value="F:oxidoreductase activity, acting on NAD(P)H as acceptor"/>
    <property type="evidence" value="ECO:0007669"/>
    <property type="project" value="UniProtKB-UniRule"/>
</dbReference>
<dbReference type="GO" id="GO:0016655">
    <property type="term" value="F:oxidoreductase activity, acting on NAD(P)H, quinone or similar compound as acceptor"/>
    <property type="evidence" value="ECO:0007669"/>
    <property type="project" value="InterPro"/>
</dbReference>
<dbReference type="Gene3D" id="3.40.50.360">
    <property type="match status" value="1"/>
</dbReference>
<dbReference type="HAMAP" id="MF_01216">
    <property type="entry name" value="Azoreductase_type1"/>
    <property type="match status" value="1"/>
</dbReference>
<dbReference type="InterPro" id="IPR003680">
    <property type="entry name" value="Flavodoxin_fold"/>
</dbReference>
<dbReference type="InterPro" id="IPR029039">
    <property type="entry name" value="Flavoprotein-like_sf"/>
</dbReference>
<dbReference type="InterPro" id="IPR050104">
    <property type="entry name" value="FMN-dep_NADH:Q_OxRdtase_AzoR1"/>
</dbReference>
<dbReference type="InterPro" id="IPR023048">
    <property type="entry name" value="NADH:quinone_OxRdtase_FMN_depd"/>
</dbReference>
<dbReference type="PANTHER" id="PTHR43741">
    <property type="entry name" value="FMN-DEPENDENT NADH-AZOREDUCTASE 1"/>
    <property type="match status" value="1"/>
</dbReference>
<dbReference type="PANTHER" id="PTHR43741:SF4">
    <property type="entry name" value="FMN-DEPENDENT NADH:QUINONE OXIDOREDUCTASE"/>
    <property type="match status" value="1"/>
</dbReference>
<dbReference type="Pfam" id="PF02525">
    <property type="entry name" value="Flavodoxin_2"/>
    <property type="match status" value="1"/>
</dbReference>
<dbReference type="SUPFAM" id="SSF52218">
    <property type="entry name" value="Flavoproteins"/>
    <property type="match status" value="1"/>
</dbReference>
<accession>Q890E7</accession>
<accession>F9USQ9</accession>
<name>AZOR1_LACPL</name>
<reference key="1">
    <citation type="journal article" date="2003" name="Proc. Natl. Acad. Sci. U.S.A.">
        <title>Complete genome sequence of Lactobacillus plantarum WCFS1.</title>
        <authorList>
            <person name="Kleerebezem M."/>
            <person name="Boekhorst J."/>
            <person name="van Kranenburg R."/>
            <person name="Molenaar D."/>
            <person name="Kuipers O.P."/>
            <person name="Leer R."/>
            <person name="Tarchini R."/>
            <person name="Peters S.A."/>
            <person name="Sandbrink H.M."/>
            <person name="Fiers M.W.E.J."/>
            <person name="Stiekema W."/>
            <person name="Klein Lankhorst R.M."/>
            <person name="Bron P.A."/>
            <person name="Hoffer S.M."/>
            <person name="Nierop Groot M.N."/>
            <person name="Kerkhoven R."/>
            <person name="De Vries M."/>
            <person name="Ursing B."/>
            <person name="De Vos W.M."/>
            <person name="Siezen R.J."/>
        </authorList>
    </citation>
    <scope>NUCLEOTIDE SEQUENCE [LARGE SCALE GENOMIC DNA]</scope>
    <source>
        <strain>ATCC BAA-793 / NCIMB 8826 / WCFS1</strain>
    </source>
</reference>
<reference key="2">
    <citation type="journal article" date="2012" name="J. Bacteriol.">
        <title>Complete resequencing and reannotation of the Lactobacillus plantarum WCFS1 genome.</title>
        <authorList>
            <person name="Siezen R.J."/>
            <person name="Francke C."/>
            <person name="Renckens B."/>
            <person name="Boekhorst J."/>
            <person name="Wels M."/>
            <person name="Kleerebezem M."/>
            <person name="van Hijum S.A."/>
        </authorList>
    </citation>
    <scope>NUCLEOTIDE SEQUENCE [LARGE SCALE GENOMIC DNA]</scope>
    <scope>GENOME REANNOTATION</scope>
    <source>
        <strain>ATCC BAA-793 / NCIMB 8826 / WCFS1</strain>
    </source>
</reference>
<comment type="function">
    <text evidence="1">Quinone reductase that provides resistance to thiol-specific stress caused by electrophilic quinones.</text>
</comment>
<comment type="function">
    <text evidence="1">Also exhibits azoreductase activity. Catalyzes the reductive cleavage of the azo bond in aromatic azo compounds to the corresponding amines.</text>
</comment>
<comment type="catalytic activity">
    <reaction evidence="1">
        <text>2 a quinone + NADH + H(+) = 2 a 1,4-benzosemiquinone + NAD(+)</text>
        <dbReference type="Rhea" id="RHEA:65952"/>
        <dbReference type="ChEBI" id="CHEBI:15378"/>
        <dbReference type="ChEBI" id="CHEBI:57540"/>
        <dbReference type="ChEBI" id="CHEBI:57945"/>
        <dbReference type="ChEBI" id="CHEBI:132124"/>
        <dbReference type="ChEBI" id="CHEBI:134225"/>
    </reaction>
</comment>
<comment type="catalytic activity">
    <reaction evidence="1">
        <text>N,N-dimethyl-1,4-phenylenediamine + anthranilate + 2 NAD(+) = 2-(4-dimethylaminophenyl)diazenylbenzoate + 2 NADH + 2 H(+)</text>
        <dbReference type="Rhea" id="RHEA:55872"/>
        <dbReference type="ChEBI" id="CHEBI:15378"/>
        <dbReference type="ChEBI" id="CHEBI:15783"/>
        <dbReference type="ChEBI" id="CHEBI:16567"/>
        <dbReference type="ChEBI" id="CHEBI:57540"/>
        <dbReference type="ChEBI" id="CHEBI:57945"/>
        <dbReference type="ChEBI" id="CHEBI:71579"/>
        <dbReference type="EC" id="1.7.1.17"/>
    </reaction>
</comment>
<comment type="cofactor">
    <cofactor evidence="1">
        <name>FMN</name>
        <dbReference type="ChEBI" id="CHEBI:58210"/>
    </cofactor>
    <text evidence="1">Binds 1 FMN per subunit.</text>
</comment>
<comment type="subunit">
    <text evidence="1">Homodimer.</text>
</comment>
<comment type="similarity">
    <text evidence="1">Belongs to the azoreductase type 1 family.</text>
</comment>
<evidence type="ECO:0000255" key="1">
    <source>
        <dbReference type="HAMAP-Rule" id="MF_01216"/>
    </source>
</evidence>
<keyword id="KW-0285">Flavoprotein</keyword>
<keyword id="KW-0288">FMN</keyword>
<keyword id="KW-0520">NAD</keyword>
<keyword id="KW-0560">Oxidoreductase</keyword>
<keyword id="KW-1185">Reference proteome</keyword>
<organism>
    <name type="scientific">Lactiplantibacillus plantarum (strain ATCC BAA-793 / NCIMB 8826 / WCFS1)</name>
    <name type="common">Lactobacillus plantarum</name>
    <dbReference type="NCBI Taxonomy" id="220668"/>
    <lineage>
        <taxon>Bacteria</taxon>
        <taxon>Bacillati</taxon>
        <taxon>Bacillota</taxon>
        <taxon>Bacilli</taxon>
        <taxon>Lactobacillales</taxon>
        <taxon>Lactobacillaceae</taxon>
        <taxon>Lactiplantibacillus</taxon>
    </lineage>
</organism>
<proteinExistence type="inferred from homology"/>
<feature type="chain" id="PRO_0000245927" description="FMN-dependent NADH:quinone oxidoreductase 1">
    <location>
        <begin position="1"/>
        <end position="215"/>
    </location>
</feature>
<gene>
    <name evidence="1" type="primary">azoR1</name>
    <name type="ordered locus">lp_0075</name>
</gene>
<protein>
    <recommendedName>
        <fullName evidence="1">FMN-dependent NADH:quinone oxidoreductase 1</fullName>
        <ecNumber evidence="1">1.6.5.-</ecNumber>
    </recommendedName>
    <alternativeName>
        <fullName evidence="1">Azo-dye reductase 1</fullName>
    </alternativeName>
    <alternativeName>
        <fullName evidence="1">FMN-dependent NADH-azo compound oxidoreductase 1</fullName>
    </alternativeName>
    <alternativeName>
        <fullName evidence="1">FMN-dependent NADH-azoreductase 1</fullName>
        <ecNumber evidence="1">1.7.1.17</ecNumber>
    </alternativeName>
</protein>
<sequence length="215" mass="25011">MTKTLIVNAHPDFRNAAHYSVQLEQAFLQLFQTRFPNDTVDVLNLYDTVIPQATVPELLGIWEKQAQHVNLSIEEQRLFAINQQLLQQFKAHHRIVIAMPLHNFNVPARLKDYIDNILVARETFRYTENGSVGLMTDNYRVMLLQASGSIYTRNDRYTPMEFSRLYLDKMFTEIMGFDRFEIVRAQGLQTNGVAVSQALKQAKMDLKAAFERFYD</sequence>